<name>LGT_FUSNN</name>
<accession>Q8R6A3</accession>
<keyword id="KW-0997">Cell inner membrane</keyword>
<keyword id="KW-1003">Cell membrane</keyword>
<keyword id="KW-0472">Membrane</keyword>
<keyword id="KW-1185">Reference proteome</keyword>
<keyword id="KW-0808">Transferase</keyword>
<keyword id="KW-0812">Transmembrane</keyword>
<keyword id="KW-1133">Transmembrane helix</keyword>
<sequence length="288" mass="32859">MNPVFLKIGPIELHYYGLMYAIAFFVGISLGKKIAKERNFDLDLVENYAFVAIISGLIGGRLYYILFNLPYYLQNPFEILAVWHGGMAIHGGILGGIAGTLIFAKIKKINPLILGDFAAGPFILGQAIGRIGNFMNGEVHGVPTFTPFSVIFNVKPKFYEWYTYYQSLSISDKANYPDLVPWGVVFPTSSPAGSEFPNLALHPAMLYELILNLIGFFIIWFILRKKENKASGYMWWWYIIIYSINRIIVSFFRVEDLMFFNFRAPHVISIILIAVSIFFLKKDNKKVF</sequence>
<comment type="function">
    <text evidence="1">Catalyzes the transfer of the diacylglyceryl group from phosphatidylglycerol to the sulfhydryl group of the N-terminal cysteine of a prolipoprotein, the first step in the formation of mature lipoproteins.</text>
</comment>
<comment type="catalytic activity">
    <reaction evidence="1">
        <text>L-cysteinyl-[prolipoprotein] + a 1,2-diacyl-sn-glycero-3-phospho-(1'-sn-glycerol) = an S-1,2-diacyl-sn-glyceryl-L-cysteinyl-[prolipoprotein] + sn-glycerol 1-phosphate + H(+)</text>
        <dbReference type="Rhea" id="RHEA:56712"/>
        <dbReference type="Rhea" id="RHEA-COMP:14679"/>
        <dbReference type="Rhea" id="RHEA-COMP:14680"/>
        <dbReference type="ChEBI" id="CHEBI:15378"/>
        <dbReference type="ChEBI" id="CHEBI:29950"/>
        <dbReference type="ChEBI" id="CHEBI:57685"/>
        <dbReference type="ChEBI" id="CHEBI:64716"/>
        <dbReference type="ChEBI" id="CHEBI:140658"/>
        <dbReference type="EC" id="2.5.1.145"/>
    </reaction>
</comment>
<comment type="pathway">
    <text evidence="1">Protein modification; lipoprotein biosynthesis (diacylglyceryl transfer).</text>
</comment>
<comment type="subcellular location">
    <subcellularLocation>
        <location evidence="1">Cell inner membrane</location>
        <topology evidence="1">Multi-pass membrane protein</topology>
    </subcellularLocation>
</comment>
<comment type="similarity">
    <text evidence="1">Belongs to the Lgt family.</text>
</comment>
<dbReference type="EC" id="2.5.1.145" evidence="1"/>
<dbReference type="EMBL" id="AE009951">
    <property type="protein sequence ID" value="AAL94685.1"/>
    <property type="molecule type" value="Genomic_DNA"/>
</dbReference>
<dbReference type="RefSeq" id="NP_603386.1">
    <property type="nucleotide sequence ID" value="NC_003454.1"/>
</dbReference>
<dbReference type="RefSeq" id="WP_011016426.1">
    <property type="nucleotide sequence ID" value="NZ_OZ209243.1"/>
</dbReference>
<dbReference type="SMR" id="Q8R6A3"/>
<dbReference type="FunCoup" id="Q8R6A3">
    <property type="interactions" value="231"/>
</dbReference>
<dbReference type="STRING" id="190304.FN0489"/>
<dbReference type="PaxDb" id="190304-FN0489"/>
<dbReference type="EnsemblBacteria" id="AAL94685">
    <property type="protein sequence ID" value="AAL94685"/>
    <property type="gene ID" value="FN0489"/>
</dbReference>
<dbReference type="GeneID" id="79783496"/>
<dbReference type="KEGG" id="fnu:FN0489"/>
<dbReference type="PATRIC" id="fig|190304.8.peg.1059"/>
<dbReference type="eggNOG" id="COG0682">
    <property type="taxonomic scope" value="Bacteria"/>
</dbReference>
<dbReference type="HOGENOM" id="CLU_013386_1_2_0"/>
<dbReference type="InParanoid" id="Q8R6A3"/>
<dbReference type="BioCyc" id="FNUC190304:G1FZS-1082-MONOMER"/>
<dbReference type="UniPathway" id="UPA00664"/>
<dbReference type="Proteomes" id="UP000002521">
    <property type="component" value="Chromosome"/>
</dbReference>
<dbReference type="GO" id="GO:0005886">
    <property type="term" value="C:plasma membrane"/>
    <property type="evidence" value="ECO:0000318"/>
    <property type="project" value="GO_Central"/>
</dbReference>
<dbReference type="GO" id="GO:0008961">
    <property type="term" value="F:phosphatidylglycerol-prolipoprotein diacylglyceryl transferase activity"/>
    <property type="evidence" value="ECO:0000318"/>
    <property type="project" value="GO_Central"/>
</dbReference>
<dbReference type="GO" id="GO:0042158">
    <property type="term" value="P:lipoprotein biosynthetic process"/>
    <property type="evidence" value="ECO:0000318"/>
    <property type="project" value="GO_Central"/>
</dbReference>
<dbReference type="HAMAP" id="MF_01147">
    <property type="entry name" value="Lgt"/>
    <property type="match status" value="1"/>
</dbReference>
<dbReference type="InterPro" id="IPR001640">
    <property type="entry name" value="Lgt"/>
</dbReference>
<dbReference type="NCBIfam" id="TIGR00544">
    <property type="entry name" value="lgt"/>
    <property type="match status" value="1"/>
</dbReference>
<dbReference type="PANTHER" id="PTHR30589:SF0">
    <property type="entry name" value="PHOSPHATIDYLGLYCEROL--PROLIPOPROTEIN DIACYLGLYCERYL TRANSFERASE"/>
    <property type="match status" value="1"/>
</dbReference>
<dbReference type="PANTHER" id="PTHR30589">
    <property type="entry name" value="PROLIPOPROTEIN DIACYLGLYCERYL TRANSFERASE"/>
    <property type="match status" value="1"/>
</dbReference>
<dbReference type="Pfam" id="PF01790">
    <property type="entry name" value="LGT"/>
    <property type="match status" value="1"/>
</dbReference>
<dbReference type="PROSITE" id="PS01311">
    <property type="entry name" value="LGT"/>
    <property type="match status" value="1"/>
</dbReference>
<organism>
    <name type="scientific">Fusobacterium nucleatum subsp. nucleatum (strain ATCC 25586 / DSM 15643 / BCRC 10681 / CIP 101130 / JCM 8532 / KCTC 2640 / LMG 13131 / VPI 4355)</name>
    <dbReference type="NCBI Taxonomy" id="190304"/>
    <lineage>
        <taxon>Bacteria</taxon>
        <taxon>Fusobacteriati</taxon>
        <taxon>Fusobacteriota</taxon>
        <taxon>Fusobacteriia</taxon>
        <taxon>Fusobacteriales</taxon>
        <taxon>Fusobacteriaceae</taxon>
        <taxon>Fusobacterium</taxon>
    </lineage>
</organism>
<proteinExistence type="inferred from homology"/>
<gene>
    <name evidence="1" type="primary">lgt</name>
    <name type="ordered locus">FN0489</name>
</gene>
<protein>
    <recommendedName>
        <fullName evidence="1">Phosphatidylglycerol--prolipoprotein diacylglyceryl transferase</fullName>
        <ecNumber evidence="1">2.5.1.145</ecNumber>
    </recommendedName>
</protein>
<feature type="chain" id="PRO_0000172604" description="Phosphatidylglycerol--prolipoprotein diacylglyceryl transferase">
    <location>
        <begin position="1"/>
        <end position="288"/>
    </location>
</feature>
<feature type="transmembrane region" description="Helical" evidence="1">
    <location>
        <begin position="8"/>
        <end position="28"/>
    </location>
</feature>
<feature type="transmembrane region" description="Helical" evidence="1">
    <location>
        <begin position="49"/>
        <end position="69"/>
    </location>
</feature>
<feature type="transmembrane region" description="Helical" evidence="1">
    <location>
        <begin position="79"/>
        <end position="99"/>
    </location>
</feature>
<feature type="transmembrane region" description="Helical" evidence="1">
    <location>
        <begin position="109"/>
        <end position="129"/>
    </location>
</feature>
<feature type="transmembrane region" description="Helical" evidence="1">
    <location>
        <begin position="203"/>
        <end position="223"/>
    </location>
</feature>
<feature type="transmembrane region" description="Helical" evidence="1">
    <location>
        <begin position="232"/>
        <end position="252"/>
    </location>
</feature>
<feature type="transmembrane region" description="Helical" evidence="1">
    <location>
        <begin position="259"/>
        <end position="279"/>
    </location>
</feature>
<feature type="binding site" evidence="1">
    <location>
        <position position="130"/>
    </location>
    <ligand>
        <name>a 1,2-diacyl-sn-glycero-3-phospho-(1'-sn-glycerol)</name>
        <dbReference type="ChEBI" id="CHEBI:64716"/>
    </ligand>
</feature>
<evidence type="ECO:0000255" key="1">
    <source>
        <dbReference type="HAMAP-Rule" id="MF_01147"/>
    </source>
</evidence>
<reference key="1">
    <citation type="journal article" date="2002" name="J. Bacteriol.">
        <title>Genome sequence and analysis of the oral bacterium Fusobacterium nucleatum strain ATCC 25586.</title>
        <authorList>
            <person name="Kapatral V."/>
            <person name="Anderson I."/>
            <person name="Ivanova N."/>
            <person name="Reznik G."/>
            <person name="Los T."/>
            <person name="Lykidis A."/>
            <person name="Bhattacharyya A."/>
            <person name="Bartman A."/>
            <person name="Gardner W."/>
            <person name="Grechkin G."/>
            <person name="Zhu L."/>
            <person name="Vasieva O."/>
            <person name="Chu L."/>
            <person name="Kogan Y."/>
            <person name="Chaga O."/>
            <person name="Goltsman E."/>
            <person name="Bernal A."/>
            <person name="Larsen N."/>
            <person name="D'Souza M."/>
            <person name="Walunas T."/>
            <person name="Pusch G."/>
            <person name="Haselkorn R."/>
            <person name="Fonstein M."/>
            <person name="Kyrpides N.C."/>
            <person name="Overbeek R."/>
        </authorList>
    </citation>
    <scope>NUCLEOTIDE SEQUENCE [LARGE SCALE GENOMIC DNA]</scope>
    <source>
        <strain>ATCC 25586 / DSM 15643 / BCRC 10681 / CIP 101130 / JCM 8532 / KCTC 2640 / LMG 13131 / VPI 4355</strain>
    </source>
</reference>